<reference key="1">
    <citation type="journal article" date="2005" name="Proc. Natl. Acad. Sci. U.S.A.">
        <title>The psychrophilic lifestyle as revealed by the genome sequence of Colwellia psychrerythraea 34H through genomic and proteomic analyses.</title>
        <authorList>
            <person name="Methe B.A."/>
            <person name="Nelson K.E."/>
            <person name="Deming J.W."/>
            <person name="Momen B."/>
            <person name="Melamud E."/>
            <person name="Zhang X."/>
            <person name="Moult J."/>
            <person name="Madupu R."/>
            <person name="Nelson W.C."/>
            <person name="Dodson R.J."/>
            <person name="Brinkac L.M."/>
            <person name="Daugherty S.C."/>
            <person name="Durkin A.S."/>
            <person name="DeBoy R.T."/>
            <person name="Kolonay J.F."/>
            <person name="Sullivan S.A."/>
            <person name="Zhou L."/>
            <person name="Davidsen T.M."/>
            <person name="Wu M."/>
            <person name="Huston A.L."/>
            <person name="Lewis M."/>
            <person name="Weaver B."/>
            <person name="Weidman J.F."/>
            <person name="Khouri H."/>
            <person name="Utterback T.R."/>
            <person name="Feldblyum T.V."/>
            <person name="Fraser C.M."/>
        </authorList>
    </citation>
    <scope>NUCLEOTIDE SEQUENCE [LARGE SCALE GENOMIC DNA]</scope>
    <source>
        <strain>34H / ATCC BAA-681</strain>
    </source>
</reference>
<name>YBEY_COLP3</name>
<gene>
    <name evidence="1" type="primary">ybeY</name>
    <name type="ordered locus">CPS_3574</name>
</gene>
<sequence length="155" mass="17668">MAHVIDLQVACTPTKLPTKEQFQLWVDTALAEVSSSPNQDFELTIRLVNNEESQQLNKQYRDKDKPTNVLSFPFEVPDGIELNLLGDLIICIEVMKQEAQEQNKALFEHWAHLVIHGCLHLVGFDHISDTEALEMESIEITILEKLGISNPYLEQ</sequence>
<feature type="chain" id="PRO_0000284192" description="Endoribonuclease YbeY">
    <location>
        <begin position="1"/>
        <end position="155"/>
    </location>
</feature>
<feature type="binding site" evidence="1">
    <location>
        <position position="116"/>
    </location>
    <ligand>
        <name>Zn(2+)</name>
        <dbReference type="ChEBI" id="CHEBI:29105"/>
        <note>catalytic</note>
    </ligand>
</feature>
<feature type="binding site" evidence="1">
    <location>
        <position position="120"/>
    </location>
    <ligand>
        <name>Zn(2+)</name>
        <dbReference type="ChEBI" id="CHEBI:29105"/>
        <note>catalytic</note>
    </ligand>
</feature>
<feature type="binding site" evidence="1">
    <location>
        <position position="126"/>
    </location>
    <ligand>
        <name>Zn(2+)</name>
        <dbReference type="ChEBI" id="CHEBI:29105"/>
        <note>catalytic</note>
    </ligand>
</feature>
<evidence type="ECO:0000255" key="1">
    <source>
        <dbReference type="HAMAP-Rule" id="MF_00009"/>
    </source>
</evidence>
<comment type="function">
    <text evidence="1">Single strand-specific metallo-endoribonuclease involved in late-stage 70S ribosome quality control and in maturation of the 3' terminus of the 16S rRNA.</text>
</comment>
<comment type="cofactor">
    <cofactor evidence="1">
        <name>Zn(2+)</name>
        <dbReference type="ChEBI" id="CHEBI:29105"/>
    </cofactor>
    <text evidence="1">Binds 1 zinc ion.</text>
</comment>
<comment type="subcellular location">
    <subcellularLocation>
        <location evidence="1">Cytoplasm</location>
    </subcellularLocation>
</comment>
<comment type="similarity">
    <text evidence="1">Belongs to the endoribonuclease YbeY family.</text>
</comment>
<protein>
    <recommendedName>
        <fullName evidence="1">Endoribonuclease YbeY</fullName>
        <ecNumber evidence="1">3.1.-.-</ecNumber>
    </recommendedName>
</protein>
<keyword id="KW-0963">Cytoplasm</keyword>
<keyword id="KW-0255">Endonuclease</keyword>
<keyword id="KW-0378">Hydrolase</keyword>
<keyword id="KW-0479">Metal-binding</keyword>
<keyword id="KW-0540">Nuclease</keyword>
<keyword id="KW-0690">Ribosome biogenesis</keyword>
<keyword id="KW-0698">rRNA processing</keyword>
<keyword id="KW-0862">Zinc</keyword>
<accession>Q47Y78</accession>
<dbReference type="EC" id="3.1.-.-" evidence="1"/>
<dbReference type="EMBL" id="CP000083">
    <property type="protein sequence ID" value="AAZ27110.1"/>
    <property type="molecule type" value="Genomic_DNA"/>
</dbReference>
<dbReference type="RefSeq" id="WP_011044328.1">
    <property type="nucleotide sequence ID" value="NC_003910.7"/>
</dbReference>
<dbReference type="SMR" id="Q47Y78"/>
<dbReference type="STRING" id="167879.CPS_3574"/>
<dbReference type="KEGG" id="cps:CPS_3574"/>
<dbReference type="HOGENOM" id="CLU_106710_0_1_6"/>
<dbReference type="Proteomes" id="UP000000547">
    <property type="component" value="Chromosome"/>
</dbReference>
<dbReference type="GO" id="GO:0005737">
    <property type="term" value="C:cytoplasm"/>
    <property type="evidence" value="ECO:0007669"/>
    <property type="project" value="UniProtKB-SubCell"/>
</dbReference>
<dbReference type="GO" id="GO:0004222">
    <property type="term" value="F:metalloendopeptidase activity"/>
    <property type="evidence" value="ECO:0007669"/>
    <property type="project" value="InterPro"/>
</dbReference>
<dbReference type="GO" id="GO:0004521">
    <property type="term" value="F:RNA endonuclease activity"/>
    <property type="evidence" value="ECO:0007669"/>
    <property type="project" value="UniProtKB-UniRule"/>
</dbReference>
<dbReference type="GO" id="GO:0008270">
    <property type="term" value="F:zinc ion binding"/>
    <property type="evidence" value="ECO:0007669"/>
    <property type="project" value="UniProtKB-UniRule"/>
</dbReference>
<dbReference type="GO" id="GO:0006364">
    <property type="term" value="P:rRNA processing"/>
    <property type="evidence" value="ECO:0007669"/>
    <property type="project" value="UniProtKB-UniRule"/>
</dbReference>
<dbReference type="Gene3D" id="3.40.390.30">
    <property type="entry name" value="Metalloproteases ('zincins'), catalytic domain"/>
    <property type="match status" value="1"/>
</dbReference>
<dbReference type="HAMAP" id="MF_00009">
    <property type="entry name" value="Endoribonucl_YbeY"/>
    <property type="match status" value="1"/>
</dbReference>
<dbReference type="InterPro" id="IPR023091">
    <property type="entry name" value="MetalPrtase_cat_dom_sf_prd"/>
</dbReference>
<dbReference type="InterPro" id="IPR002036">
    <property type="entry name" value="YbeY"/>
</dbReference>
<dbReference type="InterPro" id="IPR020549">
    <property type="entry name" value="YbeY_CS"/>
</dbReference>
<dbReference type="NCBIfam" id="TIGR00043">
    <property type="entry name" value="rRNA maturation RNase YbeY"/>
    <property type="match status" value="1"/>
</dbReference>
<dbReference type="PANTHER" id="PTHR46986">
    <property type="entry name" value="ENDORIBONUCLEASE YBEY, CHLOROPLASTIC"/>
    <property type="match status" value="1"/>
</dbReference>
<dbReference type="PANTHER" id="PTHR46986:SF1">
    <property type="entry name" value="ENDORIBONUCLEASE YBEY, CHLOROPLASTIC"/>
    <property type="match status" value="1"/>
</dbReference>
<dbReference type="Pfam" id="PF02130">
    <property type="entry name" value="YbeY"/>
    <property type="match status" value="1"/>
</dbReference>
<dbReference type="SUPFAM" id="SSF55486">
    <property type="entry name" value="Metalloproteases ('zincins'), catalytic domain"/>
    <property type="match status" value="1"/>
</dbReference>
<dbReference type="PROSITE" id="PS01306">
    <property type="entry name" value="UPF0054"/>
    <property type="match status" value="1"/>
</dbReference>
<organism>
    <name type="scientific">Colwellia psychrerythraea (strain 34H / ATCC BAA-681)</name>
    <name type="common">Vibrio psychroerythus</name>
    <dbReference type="NCBI Taxonomy" id="167879"/>
    <lineage>
        <taxon>Bacteria</taxon>
        <taxon>Pseudomonadati</taxon>
        <taxon>Pseudomonadota</taxon>
        <taxon>Gammaproteobacteria</taxon>
        <taxon>Alteromonadales</taxon>
        <taxon>Colwelliaceae</taxon>
        <taxon>Colwellia</taxon>
    </lineage>
</organism>
<proteinExistence type="inferred from homology"/>